<proteinExistence type="inferred from homology"/>
<reference key="1">
    <citation type="journal article" date="2009" name="Genome Biol.">
        <title>Genomic and genetic analyses of diversity and plant interactions of Pseudomonas fluorescens.</title>
        <authorList>
            <person name="Silby M.W."/>
            <person name="Cerdeno-Tarraga A.M."/>
            <person name="Vernikos G.S."/>
            <person name="Giddens S.R."/>
            <person name="Jackson R.W."/>
            <person name="Preston G.M."/>
            <person name="Zhang X.-X."/>
            <person name="Moon C.D."/>
            <person name="Gehrig S.M."/>
            <person name="Godfrey S.A.C."/>
            <person name="Knight C.G."/>
            <person name="Malone J.G."/>
            <person name="Robinson Z."/>
            <person name="Spiers A.J."/>
            <person name="Harris S."/>
            <person name="Challis G.L."/>
            <person name="Yaxley A.M."/>
            <person name="Harris D."/>
            <person name="Seeger K."/>
            <person name="Murphy L."/>
            <person name="Rutter S."/>
            <person name="Squares R."/>
            <person name="Quail M.A."/>
            <person name="Saunders E."/>
            <person name="Mavromatis K."/>
            <person name="Brettin T.S."/>
            <person name="Bentley S.D."/>
            <person name="Hothersall J."/>
            <person name="Stephens E."/>
            <person name="Thomas C.M."/>
            <person name="Parkhill J."/>
            <person name="Levy S.B."/>
            <person name="Rainey P.B."/>
            <person name="Thomson N.R."/>
        </authorList>
    </citation>
    <scope>NUCLEOTIDE SEQUENCE [LARGE SCALE GENOMIC DNA]</scope>
    <source>
        <strain>Pf0-1</strain>
    </source>
</reference>
<organism>
    <name type="scientific">Pseudomonas fluorescens (strain Pf0-1)</name>
    <dbReference type="NCBI Taxonomy" id="205922"/>
    <lineage>
        <taxon>Bacteria</taxon>
        <taxon>Pseudomonadati</taxon>
        <taxon>Pseudomonadota</taxon>
        <taxon>Gammaproteobacteria</taxon>
        <taxon>Pseudomonadales</taxon>
        <taxon>Pseudomonadaceae</taxon>
        <taxon>Pseudomonas</taxon>
    </lineage>
</organism>
<comment type="function">
    <text evidence="1">Trims short 3' overhangs of a variety of RNA species, leaving a one or two nucleotide 3' overhang. Responsible for the end-turnover of tRNA: specifically removes the terminal AMP residue from uncharged tRNA (tRNA-C-C-A). Also appears to be involved in tRNA biosynthesis.</text>
</comment>
<comment type="cofactor">
    <cofactor evidence="1">
        <name>Mg(2+)</name>
        <dbReference type="ChEBI" id="CHEBI:18420"/>
    </cofactor>
    <text evidence="1">Binds two Mg(2+) per subunit. The active form of the enzyme binds two Mg(2+) ions in its active site. The first Mg(2+) forms only one salt bridge with the protein.</text>
</comment>
<comment type="subunit">
    <text evidence="1">Homodimer.</text>
</comment>
<comment type="similarity">
    <text evidence="1">Belongs to the RNase T family.</text>
</comment>
<keyword id="KW-0269">Exonuclease</keyword>
<keyword id="KW-0378">Hydrolase</keyword>
<keyword id="KW-0460">Magnesium</keyword>
<keyword id="KW-0479">Metal-binding</keyword>
<keyword id="KW-0540">Nuclease</keyword>
<keyword id="KW-0819">tRNA processing</keyword>
<dbReference type="EC" id="3.1.13.-" evidence="1"/>
<dbReference type="EMBL" id="CP000094">
    <property type="protein sequence ID" value="ABA76257.1"/>
    <property type="molecule type" value="Genomic_DNA"/>
</dbReference>
<dbReference type="RefSeq" id="WP_011335739.1">
    <property type="nucleotide sequence ID" value="NC_007492.2"/>
</dbReference>
<dbReference type="SMR" id="Q3K7J7"/>
<dbReference type="KEGG" id="pfo:Pfl01_4520"/>
<dbReference type="eggNOG" id="COG0847">
    <property type="taxonomic scope" value="Bacteria"/>
</dbReference>
<dbReference type="HOGENOM" id="CLU_082724_0_0_6"/>
<dbReference type="Proteomes" id="UP000002704">
    <property type="component" value="Chromosome"/>
</dbReference>
<dbReference type="GO" id="GO:0005829">
    <property type="term" value="C:cytosol"/>
    <property type="evidence" value="ECO:0007669"/>
    <property type="project" value="TreeGrafter"/>
</dbReference>
<dbReference type="GO" id="GO:0008408">
    <property type="term" value="F:3'-5' exonuclease activity"/>
    <property type="evidence" value="ECO:0007669"/>
    <property type="project" value="TreeGrafter"/>
</dbReference>
<dbReference type="GO" id="GO:0000287">
    <property type="term" value="F:magnesium ion binding"/>
    <property type="evidence" value="ECO:0007669"/>
    <property type="project" value="UniProtKB-UniRule"/>
</dbReference>
<dbReference type="GO" id="GO:0003676">
    <property type="term" value="F:nucleic acid binding"/>
    <property type="evidence" value="ECO:0007669"/>
    <property type="project" value="InterPro"/>
</dbReference>
<dbReference type="GO" id="GO:0016896">
    <property type="term" value="F:RNA exonuclease activity, producing 5'-phosphomonoesters"/>
    <property type="evidence" value="ECO:0007669"/>
    <property type="project" value="UniProtKB-UniRule"/>
</dbReference>
<dbReference type="GO" id="GO:0045004">
    <property type="term" value="P:DNA replication proofreading"/>
    <property type="evidence" value="ECO:0007669"/>
    <property type="project" value="TreeGrafter"/>
</dbReference>
<dbReference type="GO" id="GO:0008033">
    <property type="term" value="P:tRNA processing"/>
    <property type="evidence" value="ECO:0007669"/>
    <property type="project" value="UniProtKB-KW"/>
</dbReference>
<dbReference type="CDD" id="cd06134">
    <property type="entry name" value="RNaseT"/>
    <property type="match status" value="1"/>
</dbReference>
<dbReference type="FunFam" id="3.30.420.10:FF:000009">
    <property type="entry name" value="Ribonuclease T"/>
    <property type="match status" value="1"/>
</dbReference>
<dbReference type="Gene3D" id="3.30.420.10">
    <property type="entry name" value="Ribonuclease H-like superfamily/Ribonuclease H"/>
    <property type="match status" value="1"/>
</dbReference>
<dbReference type="HAMAP" id="MF_00157">
    <property type="entry name" value="RNase_T"/>
    <property type="match status" value="1"/>
</dbReference>
<dbReference type="InterPro" id="IPR013520">
    <property type="entry name" value="Exonuclease_RNaseT/DNA_pol3"/>
</dbReference>
<dbReference type="InterPro" id="IPR005987">
    <property type="entry name" value="RNase_T"/>
</dbReference>
<dbReference type="InterPro" id="IPR012337">
    <property type="entry name" value="RNaseH-like_sf"/>
</dbReference>
<dbReference type="InterPro" id="IPR036397">
    <property type="entry name" value="RNaseH_sf"/>
</dbReference>
<dbReference type="NCBIfam" id="TIGR01298">
    <property type="entry name" value="RNaseT"/>
    <property type="match status" value="1"/>
</dbReference>
<dbReference type="PANTHER" id="PTHR30231">
    <property type="entry name" value="DNA POLYMERASE III SUBUNIT EPSILON"/>
    <property type="match status" value="1"/>
</dbReference>
<dbReference type="PANTHER" id="PTHR30231:SF2">
    <property type="entry name" value="RIBONUCLEASE T"/>
    <property type="match status" value="1"/>
</dbReference>
<dbReference type="Pfam" id="PF00929">
    <property type="entry name" value="RNase_T"/>
    <property type="match status" value="1"/>
</dbReference>
<dbReference type="SMART" id="SM00479">
    <property type="entry name" value="EXOIII"/>
    <property type="match status" value="1"/>
</dbReference>
<dbReference type="SUPFAM" id="SSF53098">
    <property type="entry name" value="Ribonuclease H-like"/>
    <property type="match status" value="1"/>
</dbReference>
<sequence>MSEDHFDDELDGQGGGGSRHPMAARFRGYLPVVVDVETGGFNSATDALLEIAATTIAMDEKGFVYPDHTYFFRVEPFEGANVEPAALEFTGIKLDHPLRMAVSEETALTDIFRGVRKALKANGCKRAILVGHNSSFDLGFLNAAVARLDMKRNPFHPFSSFDTATLAGLAYGQTVLAKACQAADIDFDGREAHSARYDTEKTAELFCGIVNRWKQMGGWEDFDD</sequence>
<evidence type="ECO:0000255" key="1">
    <source>
        <dbReference type="HAMAP-Rule" id="MF_00157"/>
    </source>
</evidence>
<accession>Q3K7J7</accession>
<name>RNT_PSEPF</name>
<protein>
    <recommendedName>
        <fullName evidence="1">Ribonuclease T</fullName>
        <ecNumber evidence="1">3.1.13.-</ecNumber>
    </recommendedName>
    <alternativeName>
        <fullName evidence="1">Exoribonuclease T</fullName>
        <shortName evidence="1">RNase T</shortName>
    </alternativeName>
</protein>
<gene>
    <name evidence="1" type="primary">rnt</name>
    <name type="ordered locus">Pfl01_4520</name>
</gene>
<feature type="chain" id="PRO_1000011408" description="Ribonuclease T">
    <location>
        <begin position="1"/>
        <end position="224"/>
    </location>
</feature>
<feature type="domain" description="Exonuclease" evidence="1">
    <location>
        <begin position="32"/>
        <end position="206"/>
    </location>
</feature>
<feature type="active site" description="Proton donor/acceptor" evidence="1">
    <location>
        <position position="193"/>
    </location>
</feature>
<feature type="binding site" evidence="1">
    <location>
        <position position="35"/>
    </location>
    <ligand>
        <name>Mg(2+)</name>
        <dbReference type="ChEBI" id="CHEBI:18420"/>
        <label>1</label>
        <note>catalytic</note>
    </ligand>
</feature>
<feature type="binding site" evidence="1">
    <location>
        <position position="35"/>
    </location>
    <ligand>
        <name>Mg(2+)</name>
        <dbReference type="ChEBI" id="CHEBI:18420"/>
        <label>2</label>
        <note>catalytic</note>
    </ligand>
</feature>
<feature type="binding site" evidence="1">
    <location>
        <position position="37"/>
    </location>
    <ligand>
        <name>Mg(2+)</name>
        <dbReference type="ChEBI" id="CHEBI:18420"/>
        <label>2</label>
        <note>catalytic</note>
    </ligand>
</feature>
<feature type="binding site" evidence="1">
    <location>
        <position position="193"/>
    </location>
    <ligand>
        <name>Mg(2+)</name>
        <dbReference type="ChEBI" id="CHEBI:18420"/>
        <label>2</label>
        <note>catalytic</note>
    </ligand>
</feature>
<feature type="binding site" evidence="1">
    <location>
        <position position="198"/>
    </location>
    <ligand>
        <name>Mg(2+)</name>
        <dbReference type="ChEBI" id="CHEBI:18420"/>
        <label>2</label>
        <note>catalytic</note>
    </ligand>
</feature>
<feature type="site" description="Important for substrate binding and specificity" evidence="1">
    <location>
        <position position="41"/>
    </location>
</feature>
<feature type="site" description="Important for substrate binding and specificity" evidence="1">
    <location>
        <position position="89"/>
    </location>
</feature>
<feature type="site" description="Important for substrate binding and specificity" evidence="1">
    <location>
        <position position="136"/>
    </location>
</feature>
<feature type="site" description="Important for substrate binding and specificity" evidence="1">
    <location>
        <position position="158"/>
    </location>
</feature>